<dbReference type="EC" id="2.7.1.130" evidence="1"/>
<dbReference type="EMBL" id="CP000513">
    <property type="protein sequence ID" value="ABQ13514.1"/>
    <property type="molecule type" value="Genomic_DNA"/>
</dbReference>
<dbReference type="RefSeq" id="WP_012031166.1">
    <property type="nucleotide sequence ID" value="NC_009446.1"/>
</dbReference>
<dbReference type="SMR" id="A5EYE3"/>
<dbReference type="STRING" id="246195.DNO_0843"/>
<dbReference type="KEGG" id="dno:DNO_0843"/>
<dbReference type="eggNOG" id="COG1663">
    <property type="taxonomic scope" value="Bacteria"/>
</dbReference>
<dbReference type="HOGENOM" id="CLU_038816_2_0_6"/>
<dbReference type="UniPathway" id="UPA00359">
    <property type="reaction ID" value="UER00482"/>
</dbReference>
<dbReference type="Proteomes" id="UP000000248">
    <property type="component" value="Chromosome"/>
</dbReference>
<dbReference type="GO" id="GO:0005886">
    <property type="term" value="C:plasma membrane"/>
    <property type="evidence" value="ECO:0007669"/>
    <property type="project" value="TreeGrafter"/>
</dbReference>
<dbReference type="GO" id="GO:0005524">
    <property type="term" value="F:ATP binding"/>
    <property type="evidence" value="ECO:0007669"/>
    <property type="project" value="UniProtKB-UniRule"/>
</dbReference>
<dbReference type="GO" id="GO:0009029">
    <property type="term" value="F:tetraacyldisaccharide 4'-kinase activity"/>
    <property type="evidence" value="ECO:0007669"/>
    <property type="project" value="UniProtKB-UniRule"/>
</dbReference>
<dbReference type="GO" id="GO:0009245">
    <property type="term" value="P:lipid A biosynthetic process"/>
    <property type="evidence" value="ECO:0007669"/>
    <property type="project" value="UniProtKB-UniRule"/>
</dbReference>
<dbReference type="GO" id="GO:0009244">
    <property type="term" value="P:lipopolysaccharide core region biosynthetic process"/>
    <property type="evidence" value="ECO:0007669"/>
    <property type="project" value="TreeGrafter"/>
</dbReference>
<dbReference type="HAMAP" id="MF_00409">
    <property type="entry name" value="LpxK"/>
    <property type="match status" value="1"/>
</dbReference>
<dbReference type="InterPro" id="IPR003758">
    <property type="entry name" value="LpxK"/>
</dbReference>
<dbReference type="InterPro" id="IPR027417">
    <property type="entry name" value="P-loop_NTPase"/>
</dbReference>
<dbReference type="NCBIfam" id="TIGR00682">
    <property type="entry name" value="lpxK"/>
    <property type="match status" value="1"/>
</dbReference>
<dbReference type="PANTHER" id="PTHR42724">
    <property type="entry name" value="TETRAACYLDISACCHARIDE 4'-KINASE"/>
    <property type="match status" value="1"/>
</dbReference>
<dbReference type="PANTHER" id="PTHR42724:SF1">
    <property type="entry name" value="TETRAACYLDISACCHARIDE 4'-KINASE, MITOCHONDRIAL-RELATED"/>
    <property type="match status" value="1"/>
</dbReference>
<dbReference type="Pfam" id="PF02606">
    <property type="entry name" value="LpxK"/>
    <property type="match status" value="1"/>
</dbReference>
<dbReference type="SUPFAM" id="SSF52540">
    <property type="entry name" value="P-loop containing nucleoside triphosphate hydrolases"/>
    <property type="match status" value="1"/>
</dbReference>
<proteinExistence type="inferred from homology"/>
<evidence type="ECO:0000255" key="1">
    <source>
        <dbReference type="HAMAP-Rule" id="MF_00409"/>
    </source>
</evidence>
<feature type="chain" id="PRO_0000340832" description="Tetraacyldisaccharide 4'-kinase">
    <location>
        <begin position="1"/>
        <end position="335"/>
    </location>
</feature>
<feature type="binding site" evidence="1">
    <location>
        <begin position="58"/>
        <end position="65"/>
    </location>
    <ligand>
        <name>ATP</name>
        <dbReference type="ChEBI" id="CHEBI:30616"/>
    </ligand>
</feature>
<name>LPXK_DICNV</name>
<accession>A5EYE3</accession>
<keyword id="KW-0067">ATP-binding</keyword>
<keyword id="KW-0418">Kinase</keyword>
<keyword id="KW-0441">Lipid A biosynthesis</keyword>
<keyword id="KW-0444">Lipid biosynthesis</keyword>
<keyword id="KW-0443">Lipid metabolism</keyword>
<keyword id="KW-0547">Nucleotide-binding</keyword>
<keyword id="KW-1185">Reference proteome</keyword>
<keyword id="KW-0808">Transferase</keyword>
<gene>
    <name evidence="1" type="primary">lpxK</name>
    <name type="ordered locus">DNO_0843</name>
</gene>
<comment type="function">
    <text evidence="1">Transfers the gamma-phosphate of ATP to the 4'-position of a tetraacyldisaccharide 1-phosphate intermediate (termed DS-1-P) to form tetraacyldisaccharide 1,4'-bis-phosphate (lipid IVA).</text>
</comment>
<comment type="catalytic activity">
    <reaction evidence="1">
        <text>a lipid A disaccharide + ATP = a lipid IVA + ADP + H(+)</text>
        <dbReference type="Rhea" id="RHEA:67840"/>
        <dbReference type="ChEBI" id="CHEBI:15378"/>
        <dbReference type="ChEBI" id="CHEBI:30616"/>
        <dbReference type="ChEBI" id="CHEBI:176343"/>
        <dbReference type="ChEBI" id="CHEBI:176425"/>
        <dbReference type="ChEBI" id="CHEBI:456216"/>
        <dbReference type="EC" id="2.7.1.130"/>
    </reaction>
</comment>
<comment type="pathway">
    <text evidence="1">Glycolipid biosynthesis; lipid IV(A) biosynthesis; lipid IV(A) from (3R)-3-hydroxytetradecanoyl-[acyl-carrier-protein] and UDP-N-acetyl-alpha-D-glucosamine: step 6/6.</text>
</comment>
<comment type="similarity">
    <text evidence="1">Belongs to the LpxK family.</text>
</comment>
<organism>
    <name type="scientific">Dichelobacter nodosus (strain VCS1703A)</name>
    <dbReference type="NCBI Taxonomy" id="246195"/>
    <lineage>
        <taxon>Bacteria</taxon>
        <taxon>Pseudomonadati</taxon>
        <taxon>Pseudomonadota</taxon>
        <taxon>Gammaproteobacteria</taxon>
        <taxon>Cardiobacteriales</taxon>
        <taxon>Cardiobacteriaceae</taxon>
        <taxon>Dichelobacter</taxon>
    </lineage>
</organism>
<sequence>MLRDIPFFWRKRCWQSWVLLPLSLIFRALVLLRRQLYRLGVIASYRAPVPVIVVGNVTVGGNGKTPLVIALVNALQEKGWKVGVISRGYGGNRRKPVLVNEKSDVRTVGDEPLLIHQKTRAPVSVYYRRQRAIENLLMHFPETELIISDDGLQHYALQYDCALLAIAADFGLGNGFCLPAGALREPLPPFATIDAIITTGKMSTALPISAPQFVTTFKNDQFYRSNGERISIETLKENPLYVVTAIARPERFLNRLHALGISPVISKIFADHAMLHESMLTFAADGLILMTTKDQVKTQNWSAFWQEKIIVLSDELTIDEELISLILSCATRTRK</sequence>
<reference key="1">
    <citation type="journal article" date="2007" name="Nat. Biotechnol.">
        <title>Genome sequence and identification of candidate vaccine antigens from the animal pathogen Dichelobacter nodosus.</title>
        <authorList>
            <person name="Myers G.S.A."/>
            <person name="Parker D."/>
            <person name="Al-Hasani K."/>
            <person name="Kennan R.M."/>
            <person name="Seemann T."/>
            <person name="Ren Q."/>
            <person name="Badger J.H."/>
            <person name="Selengut J.D."/>
            <person name="Deboy R.T."/>
            <person name="Tettelin H."/>
            <person name="Boyce J.D."/>
            <person name="McCarl V.P."/>
            <person name="Han X."/>
            <person name="Nelson W.C."/>
            <person name="Madupu R."/>
            <person name="Mohamoud Y."/>
            <person name="Holley T."/>
            <person name="Fedorova N."/>
            <person name="Khouri H."/>
            <person name="Bottomley S.P."/>
            <person name="Whittington R.J."/>
            <person name="Adler B."/>
            <person name="Songer J.G."/>
            <person name="Rood J.I."/>
            <person name="Paulsen I.T."/>
        </authorList>
    </citation>
    <scope>NUCLEOTIDE SEQUENCE [LARGE SCALE GENOMIC DNA]</scope>
    <source>
        <strain>VCS1703A</strain>
    </source>
</reference>
<protein>
    <recommendedName>
        <fullName evidence="1">Tetraacyldisaccharide 4'-kinase</fullName>
        <ecNumber evidence="1">2.7.1.130</ecNumber>
    </recommendedName>
    <alternativeName>
        <fullName evidence="1">Lipid A 4'-kinase</fullName>
    </alternativeName>
</protein>